<accession>Q1GDE3</accession>
<reference key="1">
    <citation type="submission" date="2006-05" db="EMBL/GenBank/DDBJ databases">
        <title>Complete sequence of chromosome of Silicibacter sp. TM1040.</title>
        <authorList>
            <consortium name="US DOE Joint Genome Institute"/>
            <person name="Copeland A."/>
            <person name="Lucas S."/>
            <person name="Lapidus A."/>
            <person name="Barry K."/>
            <person name="Detter J.C."/>
            <person name="Glavina del Rio T."/>
            <person name="Hammon N."/>
            <person name="Israni S."/>
            <person name="Dalin E."/>
            <person name="Tice H."/>
            <person name="Pitluck S."/>
            <person name="Brettin T."/>
            <person name="Bruce D."/>
            <person name="Han C."/>
            <person name="Tapia R."/>
            <person name="Goodwin L."/>
            <person name="Thompson L.S."/>
            <person name="Gilna P."/>
            <person name="Schmutz J."/>
            <person name="Larimer F."/>
            <person name="Land M."/>
            <person name="Hauser L."/>
            <person name="Kyrpides N."/>
            <person name="Kim E."/>
            <person name="Belas R."/>
            <person name="Moran M.A."/>
            <person name="Buchan A."/>
            <person name="Gonzalez J.M."/>
            <person name="Schell M.A."/>
            <person name="Sun F."/>
            <person name="Richardson P."/>
        </authorList>
    </citation>
    <scope>NUCLEOTIDE SEQUENCE [LARGE SCALE GENOMIC DNA]</scope>
    <source>
        <strain>TM1040</strain>
    </source>
</reference>
<organism>
    <name type="scientific">Ruegeria sp. (strain TM1040)</name>
    <name type="common">Silicibacter sp.</name>
    <dbReference type="NCBI Taxonomy" id="292414"/>
    <lineage>
        <taxon>Bacteria</taxon>
        <taxon>Pseudomonadati</taxon>
        <taxon>Pseudomonadota</taxon>
        <taxon>Alphaproteobacteria</taxon>
        <taxon>Rhodobacterales</taxon>
        <taxon>Roseobacteraceae</taxon>
        <taxon>Ruegeria</taxon>
    </lineage>
</organism>
<sequence>MRATLAIALTLATTSPAFAAGGGWNLGNTDFVVILAFLLFIGILLAAKVPSLIGKQLDNRADSIKSELEEARALREEAQTLLASYERKQQDVQAQAERIVANARDEAAAAAEQAKADLAASIARRLTAAEEQIASAEASAVKEVRDRAITIAVEVADQVISKQMTAADANKLIDAAIQDVEAKLH</sequence>
<feature type="chain" id="PRO_0000368776" description="ATP synthase subunit b 1">
    <location>
        <begin position="1"/>
        <end position="185"/>
    </location>
</feature>
<feature type="transmembrane region" description="Helical" evidence="1">
    <location>
        <begin position="4"/>
        <end position="24"/>
    </location>
</feature>
<dbReference type="EMBL" id="CP000377">
    <property type="protein sequence ID" value="ABF65323.1"/>
    <property type="molecule type" value="Genomic_DNA"/>
</dbReference>
<dbReference type="RefSeq" id="WP_011539906.1">
    <property type="nucleotide sequence ID" value="NC_008044.1"/>
</dbReference>
<dbReference type="SMR" id="Q1GDE3"/>
<dbReference type="STRING" id="292414.TM1040_2591"/>
<dbReference type="KEGG" id="sit:TM1040_2591"/>
<dbReference type="eggNOG" id="COG0711">
    <property type="taxonomic scope" value="Bacteria"/>
</dbReference>
<dbReference type="HOGENOM" id="CLU_079215_6_2_5"/>
<dbReference type="OrthoDB" id="8479836at2"/>
<dbReference type="Proteomes" id="UP000000636">
    <property type="component" value="Chromosome"/>
</dbReference>
<dbReference type="GO" id="GO:0005886">
    <property type="term" value="C:plasma membrane"/>
    <property type="evidence" value="ECO:0007669"/>
    <property type="project" value="UniProtKB-SubCell"/>
</dbReference>
<dbReference type="GO" id="GO:0045259">
    <property type="term" value="C:proton-transporting ATP synthase complex"/>
    <property type="evidence" value="ECO:0007669"/>
    <property type="project" value="UniProtKB-KW"/>
</dbReference>
<dbReference type="GO" id="GO:0046933">
    <property type="term" value="F:proton-transporting ATP synthase activity, rotational mechanism"/>
    <property type="evidence" value="ECO:0007669"/>
    <property type="project" value="UniProtKB-UniRule"/>
</dbReference>
<dbReference type="GO" id="GO:0046961">
    <property type="term" value="F:proton-transporting ATPase activity, rotational mechanism"/>
    <property type="evidence" value="ECO:0007669"/>
    <property type="project" value="TreeGrafter"/>
</dbReference>
<dbReference type="CDD" id="cd06503">
    <property type="entry name" value="ATP-synt_Fo_b"/>
    <property type="match status" value="1"/>
</dbReference>
<dbReference type="HAMAP" id="MF_01398">
    <property type="entry name" value="ATP_synth_b_bprime"/>
    <property type="match status" value="1"/>
</dbReference>
<dbReference type="InterPro" id="IPR002146">
    <property type="entry name" value="ATP_synth_b/b'su_bac/chlpt"/>
</dbReference>
<dbReference type="InterPro" id="IPR050059">
    <property type="entry name" value="ATP_synthase_B_chain"/>
</dbReference>
<dbReference type="NCBIfam" id="NF009989">
    <property type="entry name" value="PRK13455.1"/>
    <property type="match status" value="1"/>
</dbReference>
<dbReference type="PANTHER" id="PTHR33445:SF1">
    <property type="entry name" value="ATP SYNTHASE SUBUNIT B"/>
    <property type="match status" value="1"/>
</dbReference>
<dbReference type="PANTHER" id="PTHR33445">
    <property type="entry name" value="ATP SYNTHASE SUBUNIT B', CHLOROPLASTIC"/>
    <property type="match status" value="1"/>
</dbReference>
<dbReference type="Pfam" id="PF00430">
    <property type="entry name" value="ATP-synt_B"/>
    <property type="match status" value="1"/>
</dbReference>
<comment type="function">
    <text evidence="1">F(1)F(0) ATP synthase produces ATP from ADP in the presence of a proton or sodium gradient. F-type ATPases consist of two structural domains, F(1) containing the extramembraneous catalytic core and F(0) containing the membrane proton channel, linked together by a central stalk and a peripheral stalk. During catalysis, ATP synthesis in the catalytic domain of F(1) is coupled via a rotary mechanism of the central stalk subunits to proton translocation.</text>
</comment>
<comment type="function">
    <text evidence="1">Component of the F(0) channel, it forms part of the peripheral stalk, linking F(1) to F(0).</text>
</comment>
<comment type="subunit">
    <text evidence="1">F-type ATPases have 2 components, F(1) - the catalytic core - and F(0) - the membrane proton channel. F(1) has five subunits: alpha(3), beta(3), gamma(1), delta(1), epsilon(1). F(0) has three main subunits: a(1), b(2) and c(10-14). The alpha and beta chains form an alternating ring which encloses part of the gamma chain. F(1) is attached to F(0) by a central stalk formed by the gamma and epsilon chains, while a peripheral stalk is formed by the delta and b chains.</text>
</comment>
<comment type="subcellular location">
    <subcellularLocation>
        <location evidence="1">Cell inner membrane</location>
        <topology evidence="1">Single-pass membrane protein</topology>
    </subcellularLocation>
</comment>
<comment type="similarity">
    <text evidence="1">Belongs to the ATPase B chain family.</text>
</comment>
<name>ATPF1_RUEST</name>
<proteinExistence type="inferred from homology"/>
<gene>
    <name evidence="1" type="primary">atpF1</name>
    <name type="ordered locus">TM1040_2591</name>
</gene>
<evidence type="ECO:0000255" key="1">
    <source>
        <dbReference type="HAMAP-Rule" id="MF_01398"/>
    </source>
</evidence>
<keyword id="KW-0066">ATP synthesis</keyword>
<keyword id="KW-0997">Cell inner membrane</keyword>
<keyword id="KW-1003">Cell membrane</keyword>
<keyword id="KW-0138">CF(0)</keyword>
<keyword id="KW-0375">Hydrogen ion transport</keyword>
<keyword id="KW-0406">Ion transport</keyword>
<keyword id="KW-0472">Membrane</keyword>
<keyword id="KW-1185">Reference proteome</keyword>
<keyword id="KW-0812">Transmembrane</keyword>
<keyword id="KW-1133">Transmembrane helix</keyword>
<keyword id="KW-0813">Transport</keyword>
<protein>
    <recommendedName>
        <fullName evidence="1">ATP synthase subunit b 1</fullName>
    </recommendedName>
    <alternativeName>
        <fullName evidence="1">ATP synthase F(0) sector subunit b 1</fullName>
    </alternativeName>
    <alternativeName>
        <fullName evidence="1">ATPase subunit I 1</fullName>
    </alternativeName>
    <alternativeName>
        <fullName evidence="1">F-type ATPase subunit b 1</fullName>
        <shortName evidence="1">F-ATPase subunit b 1</shortName>
    </alternativeName>
</protein>